<reference key="1">
    <citation type="journal article" date="2001" name="DNA Res.">
        <title>Complete genomic sequence of the filamentous nitrogen-fixing cyanobacterium Anabaena sp. strain PCC 7120.</title>
        <authorList>
            <person name="Kaneko T."/>
            <person name="Nakamura Y."/>
            <person name="Wolk C.P."/>
            <person name="Kuritz T."/>
            <person name="Sasamoto S."/>
            <person name="Watanabe A."/>
            <person name="Iriguchi M."/>
            <person name="Ishikawa A."/>
            <person name="Kawashima K."/>
            <person name="Kimura T."/>
            <person name="Kishida Y."/>
            <person name="Kohara M."/>
            <person name="Matsumoto M."/>
            <person name="Matsuno A."/>
            <person name="Muraki A."/>
            <person name="Nakazaki N."/>
            <person name="Shimpo S."/>
            <person name="Sugimoto M."/>
            <person name="Takazawa M."/>
            <person name="Yamada M."/>
            <person name="Yasuda M."/>
            <person name="Tabata S."/>
        </authorList>
    </citation>
    <scope>NUCLEOTIDE SEQUENCE [LARGE SCALE GENOMIC DNA]</scope>
    <source>
        <strain>PCC 7120 / SAG 25.82 / UTEX 2576</strain>
    </source>
</reference>
<accession>Q8YPJ4</accession>
<sequence>MKLTRRESKERRHRRVRGKVQGSPERPRLAVFRSNEHIYAQVIDDTQHHTLAAASTVEPELKSSLASGSNCEASAQIGKLIAARSLEKGITKVVFDRGGNLYHGRIKALAEAAREAGLDF</sequence>
<proteinExistence type="inferred from homology"/>
<dbReference type="EMBL" id="BA000019">
    <property type="protein sequence ID" value="BAB75899.1"/>
    <property type="molecule type" value="Genomic_DNA"/>
</dbReference>
<dbReference type="PIR" id="AI2330">
    <property type="entry name" value="AI2330"/>
</dbReference>
<dbReference type="RefSeq" id="WP_010998338.1">
    <property type="nucleotide sequence ID" value="NZ_RSCN01000010.1"/>
</dbReference>
<dbReference type="SMR" id="Q8YPJ4"/>
<dbReference type="STRING" id="103690.gene:10496249"/>
<dbReference type="KEGG" id="ana:all4200"/>
<dbReference type="eggNOG" id="COG0256">
    <property type="taxonomic scope" value="Bacteria"/>
</dbReference>
<dbReference type="OrthoDB" id="9810939at2"/>
<dbReference type="Proteomes" id="UP000002483">
    <property type="component" value="Chromosome"/>
</dbReference>
<dbReference type="GO" id="GO:0022625">
    <property type="term" value="C:cytosolic large ribosomal subunit"/>
    <property type="evidence" value="ECO:0007669"/>
    <property type="project" value="TreeGrafter"/>
</dbReference>
<dbReference type="GO" id="GO:0008097">
    <property type="term" value="F:5S rRNA binding"/>
    <property type="evidence" value="ECO:0007669"/>
    <property type="project" value="TreeGrafter"/>
</dbReference>
<dbReference type="GO" id="GO:0003735">
    <property type="term" value="F:structural constituent of ribosome"/>
    <property type="evidence" value="ECO:0007669"/>
    <property type="project" value="InterPro"/>
</dbReference>
<dbReference type="GO" id="GO:0006412">
    <property type="term" value="P:translation"/>
    <property type="evidence" value="ECO:0007669"/>
    <property type="project" value="UniProtKB-UniRule"/>
</dbReference>
<dbReference type="CDD" id="cd00432">
    <property type="entry name" value="Ribosomal_L18_L5e"/>
    <property type="match status" value="1"/>
</dbReference>
<dbReference type="FunFam" id="3.30.420.100:FF:000001">
    <property type="entry name" value="50S ribosomal protein L18"/>
    <property type="match status" value="1"/>
</dbReference>
<dbReference type="Gene3D" id="3.30.420.100">
    <property type="match status" value="1"/>
</dbReference>
<dbReference type="HAMAP" id="MF_01337_B">
    <property type="entry name" value="Ribosomal_uL18_B"/>
    <property type="match status" value="1"/>
</dbReference>
<dbReference type="InterPro" id="IPR004389">
    <property type="entry name" value="Ribosomal_uL18_bac-type"/>
</dbReference>
<dbReference type="InterPro" id="IPR005484">
    <property type="entry name" value="Ribosomal_uL18_bac/euk"/>
</dbReference>
<dbReference type="NCBIfam" id="TIGR00060">
    <property type="entry name" value="L18_bact"/>
    <property type="match status" value="1"/>
</dbReference>
<dbReference type="PANTHER" id="PTHR12899">
    <property type="entry name" value="39S RIBOSOMAL PROTEIN L18, MITOCHONDRIAL"/>
    <property type="match status" value="1"/>
</dbReference>
<dbReference type="PANTHER" id="PTHR12899:SF3">
    <property type="entry name" value="LARGE RIBOSOMAL SUBUNIT PROTEIN UL18M"/>
    <property type="match status" value="1"/>
</dbReference>
<dbReference type="Pfam" id="PF00861">
    <property type="entry name" value="Ribosomal_L18p"/>
    <property type="match status" value="1"/>
</dbReference>
<dbReference type="SUPFAM" id="SSF53137">
    <property type="entry name" value="Translational machinery components"/>
    <property type="match status" value="1"/>
</dbReference>
<evidence type="ECO:0000255" key="1">
    <source>
        <dbReference type="HAMAP-Rule" id="MF_01337"/>
    </source>
</evidence>
<evidence type="ECO:0000256" key="2">
    <source>
        <dbReference type="SAM" id="MobiDB-lite"/>
    </source>
</evidence>
<evidence type="ECO:0000305" key="3"/>
<keyword id="KW-1185">Reference proteome</keyword>
<keyword id="KW-0687">Ribonucleoprotein</keyword>
<keyword id="KW-0689">Ribosomal protein</keyword>
<keyword id="KW-0694">RNA-binding</keyword>
<keyword id="KW-0699">rRNA-binding</keyword>
<organism>
    <name type="scientific">Nostoc sp. (strain PCC 7120 / SAG 25.82 / UTEX 2576)</name>
    <dbReference type="NCBI Taxonomy" id="103690"/>
    <lineage>
        <taxon>Bacteria</taxon>
        <taxon>Bacillati</taxon>
        <taxon>Cyanobacteriota</taxon>
        <taxon>Cyanophyceae</taxon>
        <taxon>Nostocales</taxon>
        <taxon>Nostocaceae</taxon>
        <taxon>Nostoc</taxon>
    </lineage>
</organism>
<feature type="chain" id="PRO_0000131200" description="Large ribosomal subunit protein uL18">
    <location>
        <begin position="1"/>
        <end position="120"/>
    </location>
</feature>
<feature type="region of interest" description="Disordered" evidence="2">
    <location>
        <begin position="1"/>
        <end position="26"/>
    </location>
</feature>
<feature type="compositionally biased region" description="Basic and acidic residues" evidence="2">
    <location>
        <begin position="1"/>
        <end position="10"/>
    </location>
</feature>
<name>RL18_NOSS1</name>
<gene>
    <name evidence="1" type="primary">rplR</name>
    <name evidence="1" type="synonym">rpl18</name>
    <name type="ordered locus">all4200</name>
</gene>
<comment type="function">
    <text evidence="1">This is one of the proteins that bind and probably mediate the attachment of the 5S RNA into the large ribosomal subunit, where it forms part of the central protuberance.</text>
</comment>
<comment type="subunit">
    <text evidence="1">Part of the 50S ribosomal subunit; part of the 5S rRNA/L5/L18/L25 subcomplex. Contacts the 5S and 23S rRNAs.</text>
</comment>
<comment type="similarity">
    <text evidence="1">Belongs to the universal ribosomal protein uL18 family.</text>
</comment>
<protein>
    <recommendedName>
        <fullName evidence="1">Large ribosomal subunit protein uL18</fullName>
    </recommendedName>
    <alternativeName>
        <fullName evidence="3">50S ribosomal protein L18</fullName>
    </alternativeName>
</protein>